<proteinExistence type="evidence at protein level"/>
<gene>
    <name type="primary">TMEM210</name>
</gene>
<organism>
    <name type="scientific">Homo sapiens</name>
    <name type="common">Human</name>
    <dbReference type="NCBI Taxonomy" id="9606"/>
    <lineage>
        <taxon>Eukaryota</taxon>
        <taxon>Metazoa</taxon>
        <taxon>Chordata</taxon>
        <taxon>Craniata</taxon>
        <taxon>Vertebrata</taxon>
        <taxon>Euteleostomi</taxon>
        <taxon>Mammalia</taxon>
        <taxon>Eutheria</taxon>
        <taxon>Euarchontoglires</taxon>
        <taxon>Primates</taxon>
        <taxon>Haplorrhini</taxon>
        <taxon>Catarrhini</taxon>
        <taxon>Hominidae</taxon>
        <taxon>Homo</taxon>
    </lineage>
</organism>
<evidence type="ECO:0000255" key="1"/>
<evidence type="ECO:0000256" key="2">
    <source>
        <dbReference type="SAM" id="MobiDB-lite"/>
    </source>
</evidence>
<evidence type="ECO:0000269" key="3">
    <source>
    </source>
</evidence>
<evidence type="ECO:0000305" key="4"/>
<reference key="1">
    <citation type="journal article" date="2004" name="Nature">
        <title>DNA sequence and analysis of human chromosome 9.</title>
        <authorList>
            <person name="Humphray S.J."/>
            <person name="Oliver K."/>
            <person name="Hunt A.R."/>
            <person name="Plumb R.W."/>
            <person name="Loveland J.E."/>
            <person name="Howe K.L."/>
            <person name="Andrews T.D."/>
            <person name="Searle S."/>
            <person name="Hunt S.E."/>
            <person name="Scott C.E."/>
            <person name="Jones M.C."/>
            <person name="Ainscough R."/>
            <person name="Almeida J.P."/>
            <person name="Ambrose K.D."/>
            <person name="Ashwell R.I.S."/>
            <person name="Babbage A.K."/>
            <person name="Babbage S."/>
            <person name="Bagguley C.L."/>
            <person name="Bailey J."/>
            <person name="Banerjee R."/>
            <person name="Barker D.J."/>
            <person name="Barlow K.F."/>
            <person name="Bates K."/>
            <person name="Beasley H."/>
            <person name="Beasley O."/>
            <person name="Bird C.P."/>
            <person name="Bray-Allen S."/>
            <person name="Brown A.J."/>
            <person name="Brown J.Y."/>
            <person name="Burford D."/>
            <person name="Burrill W."/>
            <person name="Burton J."/>
            <person name="Carder C."/>
            <person name="Carter N.P."/>
            <person name="Chapman J.C."/>
            <person name="Chen Y."/>
            <person name="Clarke G."/>
            <person name="Clark S.Y."/>
            <person name="Clee C.M."/>
            <person name="Clegg S."/>
            <person name="Collier R.E."/>
            <person name="Corby N."/>
            <person name="Crosier M."/>
            <person name="Cummings A.T."/>
            <person name="Davies J."/>
            <person name="Dhami P."/>
            <person name="Dunn M."/>
            <person name="Dutta I."/>
            <person name="Dyer L.W."/>
            <person name="Earthrowl M.E."/>
            <person name="Faulkner L."/>
            <person name="Fleming C.J."/>
            <person name="Frankish A."/>
            <person name="Frankland J.A."/>
            <person name="French L."/>
            <person name="Fricker D.G."/>
            <person name="Garner P."/>
            <person name="Garnett J."/>
            <person name="Ghori J."/>
            <person name="Gilbert J.G.R."/>
            <person name="Glison C."/>
            <person name="Grafham D.V."/>
            <person name="Gribble S."/>
            <person name="Griffiths C."/>
            <person name="Griffiths-Jones S."/>
            <person name="Grocock R."/>
            <person name="Guy J."/>
            <person name="Hall R.E."/>
            <person name="Hammond S."/>
            <person name="Harley J.L."/>
            <person name="Harrison E.S.I."/>
            <person name="Hart E.A."/>
            <person name="Heath P.D."/>
            <person name="Henderson C.D."/>
            <person name="Hopkins B.L."/>
            <person name="Howard P.J."/>
            <person name="Howden P.J."/>
            <person name="Huckle E."/>
            <person name="Johnson C."/>
            <person name="Johnson D."/>
            <person name="Joy A.A."/>
            <person name="Kay M."/>
            <person name="Keenan S."/>
            <person name="Kershaw J.K."/>
            <person name="Kimberley A.M."/>
            <person name="King A."/>
            <person name="Knights A."/>
            <person name="Laird G.K."/>
            <person name="Langford C."/>
            <person name="Lawlor S."/>
            <person name="Leongamornlert D.A."/>
            <person name="Leversha M."/>
            <person name="Lloyd C."/>
            <person name="Lloyd D.M."/>
            <person name="Lovell J."/>
            <person name="Martin S."/>
            <person name="Mashreghi-Mohammadi M."/>
            <person name="Matthews L."/>
            <person name="McLaren S."/>
            <person name="McLay K.E."/>
            <person name="McMurray A."/>
            <person name="Milne S."/>
            <person name="Nickerson T."/>
            <person name="Nisbett J."/>
            <person name="Nordsiek G."/>
            <person name="Pearce A.V."/>
            <person name="Peck A.I."/>
            <person name="Porter K.M."/>
            <person name="Pandian R."/>
            <person name="Pelan S."/>
            <person name="Phillimore B."/>
            <person name="Povey S."/>
            <person name="Ramsey Y."/>
            <person name="Rand V."/>
            <person name="Scharfe M."/>
            <person name="Sehra H.K."/>
            <person name="Shownkeen R."/>
            <person name="Sims S.K."/>
            <person name="Skuce C.D."/>
            <person name="Smith M."/>
            <person name="Steward C.A."/>
            <person name="Swarbreck D."/>
            <person name="Sycamore N."/>
            <person name="Tester J."/>
            <person name="Thorpe A."/>
            <person name="Tracey A."/>
            <person name="Tromans A."/>
            <person name="Thomas D.W."/>
            <person name="Wall M."/>
            <person name="Wallis J.M."/>
            <person name="West A.P."/>
            <person name="Whitehead S.L."/>
            <person name="Willey D.L."/>
            <person name="Williams S.A."/>
            <person name="Wilming L."/>
            <person name="Wray P.W."/>
            <person name="Young L."/>
            <person name="Ashurst J.L."/>
            <person name="Coulson A."/>
            <person name="Blocker H."/>
            <person name="Durbin R.M."/>
            <person name="Sulston J.E."/>
            <person name="Hubbard T."/>
            <person name="Jackson M.J."/>
            <person name="Bentley D.R."/>
            <person name="Beck S."/>
            <person name="Rogers J."/>
            <person name="Dunham I."/>
        </authorList>
    </citation>
    <scope>NUCLEOTIDE SEQUENCE [LARGE SCALE GENOMIC DNA]</scope>
</reference>
<reference key="2">
    <citation type="journal article" date="2019" name="J. Proteome Res.">
        <title>Cell Type-Specific Expression of Testis Elevated Genes Based on Transcriptomics and Antibody-Based Proteomics.</title>
        <authorList>
            <person name="Pineau C."/>
            <person name="Hikmet F."/>
            <person name="Zhang C."/>
            <person name="Oksvold P."/>
            <person name="Chen S."/>
            <person name="Fagerberg L."/>
            <person name="Uhlen M."/>
            <person name="Lindskog C."/>
        </authorList>
    </citation>
    <scope>SUBCELLULAR LOCATION</scope>
</reference>
<keyword id="KW-0968">Cytoplasmic vesicle</keyword>
<keyword id="KW-0472">Membrane</keyword>
<keyword id="KW-1267">Proteomics identification</keyword>
<keyword id="KW-1185">Reference proteome</keyword>
<keyword id="KW-0732">Signal</keyword>
<keyword id="KW-0812">Transmembrane</keyword>
<keyword id="KW-1133">Transmembrane helix</keyword>
<feature type="signal peptide" evidence="1">
    <location>
        <begin position="1"/>
        <end position="31"/>
    </location>
</feature>
<feature type="chain" id="PRO_0000329080" description="Transmembrane protein 210">
    <location>
        <begin position="32"/>
        <end position="147"/>
    </location>
</feature>
<feature type="topological domain" description="Extracellular" evidence="1">
    <location>
        <begin position="32"/>
        <end position="47"/>
    </location>
</feature>
<feature type="transmembrane region" description="Helical" evidence="1">
    <location>
        <begin position="48"/>
        <end position="68"/>
    </location>
</feature>
<feature type="topological domain" description="Cytoplasmic" evidence="1">
    <location>
        <begin position="69"/>
        <end position="147"/>
    </location>
</feature>
<feature type="region of interest" description="Disordered" evidence="2">
    <location>
        <begin position="128"/>
        <end position="147"/>
    </location>
</feature>
<feature type="compositionally biased region" description="Pro residues" evidence="2">
    <location>
        <begin position="137"/>
        <end position="147"/>
    </location>
</feature>
<dbReference type="EMBL" id="AL929554">
    <property type="status" value="NOT_ANNOTATED_CDS"/>
    <property type="molecule type" value="Genomic_DNA"/>
</dbReference>
<dbReference type="CCDS" id="CCDS65197.1"/>
<dbReference type="RefSeq" id="NP_001269406.1">
    <property type="nucleotide sequence ID" value="NM_001282477.2"/>
</dbReference>
<dbReference type="STRING" id="9606.ENSP00000456333"/>
<dbReference type="PhosphoSitePlus" id="A6NLX4"/>
<dbReference type="BioMuta" id="TMEM210"/>
<dbReference type="MassIVE" id="A6NLX4"/>
<dbReference type="PaxDb" id="9606-ENSP00000456333"/>
<dbReference type="PeptideAtlas" id="A6NLX4"/>
<dbReference type="ProteomicsDB" id="1498"/>
<dbReference type="Antibodypedia" id="56627">
    <property type="antibodies" value="5 antibodies from 5 providers"/>
</dbReference>
<dbReference type="DNASU" id="100505993"/>
<dbReference type="Ensembl" id="ENST00000413619.3">
    <property type="protein sequence ID" value="ENSP00000456333.2"/>
    <property type="gene ID" value="ENSG00000185863.8"/>
</dbReference>
<dbReference type="GeneID" id="100505993"/>
<dbReference type="KEGG" id="hsa:100505993"/>
<dbReference type="MANE-Select" id="ENST00000413619.3">
    <property type="protein sequence ID" value="ENSP00000456333.2"/>
    <property type="RefSeq nucleotide sequence ID" value="NM_001282477.2"/>
    <property type="RefSeq protein sequence ID" value="NP_001269406.1"/>
</dbReference>
<dbReference type="UCSC" id="uc033dlm.2">
    <property type="organism name" value="human"/>
</dbReference>
<dbReference type="AGR" id="HGNC:34059"/>
<dbReference type="CTD" id="100505993"/>
<dbReference type="GeneCards" id="TMEM210"/>
<dbReference type="HGNC" id="HGNC:34059">
    <property type="gene designation" value="TMEM210"/>
</dbReference>
<dbReference type="HPA" id="ENSG00000185863">
    <property type="expression patterns" value="Tissue enriched (testis)"/>
</dbReference>
<dbReference type="neXtProt" id="NX_A6NLX4"/>
<dbReference type="OpenTargets" id="ENSG00000185863"/>
<dbReference type="VEuPathDB" id="HostDB:ENSG00000185863"/>
<dbReference type="eggNOG" id="ENOG502THU2">
    <property type="taxonomic scope" value="Eukaryota"/>
</dbReference>
<dbReference type="GeneTree" id="ENSGT00390000008939"/>
<dbReference type="HOGENOM" id="CLU_148113_0_0_1"/>
<dbReference type="InParanoid" id="A6NLX4"/>
<dbReference type="OMA" id="ETCPGHM"/>
<dbReference type="OrthoDB" id="9837148at2759"/>
<dbReference type="PAN-GO" id="A6NLX4">
    <property type="GO annotations" value="0 GO annotations based on evolutionary models"/>
</dbReference>
<dbReference type="PhylomeDB" id="A6NLX4"/>
<dbReference type="TreeFam" id="TF338189"/>
<dbReference type="PathwayCommons" id="A6NLX4"/>
<dbReference type="SignaLink" id="A6NLX4"/>
<dbReference type="BioGRID-ORCS" id="100505993">
    <property type="hits" value="17 hits in 997 CRISPR screens"/>
</dbReference>
<dbReference type="GenomeRNAi" id="100505993"/>
<dbReference type="Pharos" id="A6NLX4">
    <property type="development level" value="Tdark"/>
</dbReference>
<dbReference type="PRO" id="PR:A6NLX4"/>
<dbReference type="Proteomes" id="UP000005640">
    <property type="component" value="Chromosome 9"/>
</dbReference>
<dbReference type="RNAct" id="A6NLX4">
    <property type="molecule type" value="protein"/>
</dbReference>
<dbReference type="Bgee" id="ENSG00000185863">
    <property type="expression patterns" value="Expressed in right testis and 60 other cell types or tissues"/>
</dbReference>
<dbReference type="ExpressionAtlas" id="A6NLX4">
    <property type="expression patterns" value="baseline and differential"/>
</dbReference>
<dbReference type="GO" id="GO:0001669">
    <property type="term" value="C:acrosomal vesicle"/>
    <property type="evidence" value="ECO:0000314"/>
    <property type="project" value="UniProtKB"/>
</dbReference>
<dbReference type="GO" id="GO:0016020">
    <property type="term" value="C:membrane"/>
    <property type="evidence" value="ECO:0007669"/>
    <property type="project" value="UniProtKB-SubCell"/>
</dbReference>
<dbReference type="InterPro" id="IPR028123">
    <property type="entry name" value="TMEM210"/>
</dbReference>
<dbReference type="PANTHER" id="PTHR39234">
    <property type="entry name" value="TRANSMEMBRANE PROTEIN 210"/>
    <property type="match status" value="1"/>
</dbReference>
<dbReference type="PANTHER" id="PTHR39234:SF1">
    <property type="entry name" value="TRANSMEMBRANE PROTEIN 210"/>
    <property type="match status" value="1"/>
</dbReference>
<dbReference type="Pfam" id="PF15195">
    <property type="entry name" value="TMEM210"/>
    <property type="match status" value="1"/>
</dbReference>
<sequence length="147" mass="15516">MAPGPWPVSCLRGGPLGLTYLSLLLIPAAAGTYCECSLGLSREALIALLVVLAGISASCFCALVIVAIGVLRAKGETCPRQVDNRLVENFGVQEDLMDLHPVYVESQLMDADLEVSLVPPLEDQSLVAIPMEASSEEPPPPPPLPPE</sequence>
<accession>A6NLX4</accession>
<protein>
    <recommendedName>
        <fullName>Transmembrane protein 210</fullName>
    </recommendedName>
</protein>
<name>TM210_HUMAN</name>
<comment type="subcellular location">
    <subcellularLocation>
        <location evidence="4">Membrane</location>
        <topology evidence="4">Single-pass type I membrane protein</topology>
    </subcellularLocation>
    <subcellularLocation>
        <location evidence="3">Cytoplasmic vesicle</location>
        <location evidence="3">Secretory vesicle</location>
        <location evidence="3">Acrosome</location>
    </subcellularLocation>
</comment>